<name>CHEB5_GEOMG</name>
<dbReference type="EC" id="3.1.1.61" evidence="1"/>
<dbReference type="EC" id="3.5.1.44" evidence="1"/>
<dbReference type="EMBL" id="CP000148">
    <property type="protein sequence ID" value="ABB33482.1"/>
    <property type="molecule type" value="Genomic_DNA"/>
</dbReference>
<dbReference type="RefSeq" id="WP_004512706.1">
    <property type="nucleotide sequence ID" value="NC_007517.1"/>
</dbReference>
<dbReference type="SMR" id="Q39QJ2"/>
<dbReference type="STRING" id="269799.Gmet_3269"/>
<dbReference type="KEGG" id="gme:Gmet_3269"/>
<dbReference type="eggNOG" id="COG2201">
    <property type="taxonomic scope" value="Bacteria"/>
</dbReference>
<dbReference type="HOGENOM" id="CLU_000445_51_0_7"/>
<dbReference type="Proteomes" id="UP000007073">
    <property type="component" value="Chromosome"/>
</dbReference>
<dbReference type="GO" id="GO:0005737">
    <property type="term" value="C:cytoplasm"/>
    <property type="evidence" value="ECO:0007669"/>
    <property type="project" value="UniProtKB-SubCell"/>
</dbReference>
<dbReference type="GO" id="GO:0000156">
    <property type="term" value="F:phosphorelay response regulator activity"/>
    <property type="evidence" value="ECO:0007669"/>
    <property type="project" value="InterPro"/>
</dbReference>
<dbReference type="GO" id="GO:0008984">
    <property type="term" value="F:protein-glutamate methylesterase activity"/>
    <property type="evidence" value="ECO:0007669"/>
    <property type="project" value="UniProtKB-UniRule"/>
</dbReference>
<dbReference type="GO" id="GO:0050568">
    <property type="term" value="F:protein-glutamine glutaminase activity"/>
    <property type="evidence" value="ECO:0007669"/>
    <property type="project" value="UniProtKB-UniRule"/>
</dbReference>
<dbReference type="GO" id="GO:0006935">
    <property type="term" value="P:chemotaxis"/>
    <property type="evidence" value="ECO:0007669"/>
    <property type="project" value="UniProtKB-UniRule"/>
</dbReference>
<dbReference type="CDD" id="cd16432">
    <property type="entry name" value="CheB_Rec"/>
    <property type="match status" value="1"/>
</dbReference>
<dbReference type="CDD" id="cd17541">
    <property type="entry name" value="REC_CheB-like"/>
    <property type="match status" value="1"/>
</dbReference>
<dbReference type="Gene3D" id="3.40.50.2300">
    <property type="match status" value="1"/>
</dbReference>
<dbReference type="Gene3D" id="3.40.50.180">
    <property type="entry name" value="Methylesterase CheB, C-terminal domain"/>
    <property type="match status" value="1"/>
</dbReference>
<dbReference type="HAMAP" id="MF_00099">
    <property type="entry name" value="CheB_chemtxs"/>
    <property type="match status" value="1"/>
</dbReference>
<dbReference type="InterPro" id="IPR008248">
    <property type="entry name" value="CheB-like"/>
</dbReference>
<dbReference type="InterPro" id="IPR035909">
    <property type="entry name" value="CheB_C"/>
</dbReference>
<dbReference type="InterPro" id="IPR011006">
    <property type="entry name" value="CheY-like_superfamily"/>
</dbReference>
<dbReference type="InterPro" id="IPR000673">
    <property type="entry name" value="Sig_transdc_resp-reg_Me-estase"/>
</dbReference>
<dbReference type="InterPro" id="IPR001789">
    <property type="entry name" value="Sig_transdc_resp-reg_receiver"/>
</dbReference>
<dbReference type="NCBIfam" id="NF001965">
    <property type="entry name" value="PRK00742.1"/>
    <property type="match status" value="1"/>
</dbReference>
<dbReference type="PANTHER" id="PTHR42872">
    <property type="entry name" value="PROTEIN-GLUTAMATE METHYLESTERASE/PROTEIN-GLUTAMINE GLUTAMINASE"/>
    <property type="match status" value="1"/>
</dbReference>
<dbReference type="PANTHER" id="PTHR42872:SF3">
    <property type="entry name" value="PROTEIN-GLUTAMATE METHYLESTERASE_PROTEIN-GLUTAMINE GLUTAMINASE 1"/>
    <property type="match status" value="1"/>
</dbReference>
<dbReference type="Pfam" id="PF01339">
    <property type="entry name" value="CheB_methylest"/>
    <property type="match status" value="1"/>
</dbReference>
<dbReference type="Pfam" id="PF00072">
    <property type="entry name" value="Response_reg"/>
    <property type="match status" value="1"/>
</dbReference>
<dbReference type="PIRSF" id="PIRSF000876">
    <property type="entry name" value="RR_chemtxs_CheB"/>
    <property type="match status" value="1"/>
</dbReference>
<dbReference type="SMART" id="SM00448">
    <property type="entry name" value="REC"/>
    <property type="match status" value="1"/>
</dbReference>
<dbReference type="SUPFAM" id="SSF52172">
    <property type="entry name" value="CheY-like"/>
    <property type="match status" value="1"/>
</dbReference>
<dbReference type="SUPFAM" id="SSF52738">
    <property type="entry name" value="Methylesterase CheB, C-terminal domain"/>
    <property type="match status" value="1"/>
</dbReference>
<dbReference type="PROSITE" id="PS50122">
    <property type="entry name" value="CHEB"/>
    <property type="match status" value="1"/>
</dbReference>
<dbReference type="PROSITE" id="PS50110">
    <property type="entry name" value="RESPONSE_REGULATORY"/>
    <property type="match status" value="1"/>
</dbReference>
<sequence>MLPNQERKLRVLVVDDSSFMRMVIRSVLEKDPAIEVIAVAMDGVEGVEKALALRPDLITMDIEMPRLDGISALKEIMAKAPTRVLMVSTLTCEGAKATFDALDAGAIDYIPKNVTDSIDAQKAFKEELLRKVKGSGISILGRPLVSPSPRLVVPPRPVIIPRPAGQRYQYVGIGASTGGPVAVQEVLGRIPGNFPHGIVVAIHMPKAFTGPYAERLNTKCSLQVKEAKAGDIVQPGVVLVTPGGMHTALVRQGSTVAIRTIATAEYPQYIYIPSVDHMLTTFADACNGSLLGVILTGMGADGFKGMKHLKTKGGGTIVQDEATSTIYGMPRACIEGGVADTVLPLTQIGTEITKIAG</sequence>
<evidence type="ECO:0000255" key="1">
    <source>
        <dbReference type="HAMAP-Rule" id="MF_00099"/>
    </source>
</evidence>
<feature type="chain" id="PRO_0000264280" description="Protein-glutamate methylesterase/protein-glutamine glutaminase 5">
    <location>
        <begin position="1"/>
        <end position="357"/>
    </location>
</feature>
<feature type="domain" description="Response regulatory" evidence="1">
    <location>
        <begin position="10"/>
        <end position="127"/>
    </location>
</feature>
<feature type="domain" description="CheB-type methylesterase" evidence="1">
    <location>
        <begin position="161"/>
        <end position="357"/>
    </location>
</feature>
<feature type="active site" evidence="1">
    <location>
        <position position="176"/>
    </location>
</feature>
<feature type="active site" evidence="1">
    <location>
        <position position="203"/>
    </location>
</feature>
<feature type="active site" evidence="1">
    <location>
        <position position="301"/>
    </location>
</feature>
<feature type="modified residue" description="4-aspartylphosphate" evidence="1">
    <location>
        <position position="61"/>
    </location>
</feature>
<accession>Q39QJ2</accession>
<comment type="function">
    <text evidence="1">Involved in chemotaxis. Part of a chemotaxis signal transduction system that modulates chemotaxis in response to various stimuli. Catalyzes the demethylation of specific methylglutamate residues introduced into the chemoreceptors (methyl-accepting chemotaxis proteins or MCP) by CheR. Also mediates the irreversible deamidation of specific glutamine residues to glutamic acid.</text>
</comment>
<comment type="catalytic activity">
    <reaction evidence="1">
        <text>[protein]-L-glutamate 5-O-methyl ester + H2O = L-glutamyl-[protein] + methanol + H(+)</text>
        <dbReference type="Rhea" id="RHEA:23236"/>
        <dbReference type="Rhea" id="RHEA-COMP:10208"/>
        <dbReference type="Rhea" id="RHEA-COMP:10311"/>
        <dbReference type="ChEBI" id="CHEBI:15377"/>
        <dbReference type="ChEBI" id="CHEBI:15378"/>
        <dbReference type="ChEBI" id="CHEBI:17790"/>
        <dbReference type="ChEBI" id="CHEBI:29973"/>
        <dbReference type="ChEBI" id="CHEBI:82795"/>
        <dbReference type="EC" id="3.1.1.61"/>
    </reaction>
</comment>
<comment type="catalytic activity">
    <reaction evidence="1">
        <text>L-glutaminyl-[protein] + H2O = L-glutamyl-[protein] + NH4(+)</text>
        <dbReference type="Rhea" id="RHEA:16441"/>
        <dbReference type="Rhea" id="RHEA-COMP:10207"/>
        <dbReference type="Rhea" id="RHEA-COMP:10208"/>
        <dbReference type="ChEBI" id="CHEBI:15377"/>
        <dbReference type="ChEBI" id="CHEBI:28938"/>
        <dbReference type="ChEBI" id="CHEBI:29973"/>
        <dbReference type="ChEBI" id="CHEBI:30011"/>
        <dbReference type="EC" id="3.5.1.44"/>
    </reaction>
</comment>
<comment type="subcellular location">
    <subcellularLocation>
        <location evidence="1">Cytoplasm</location>
    </subcellularLocation>
</comment>
<comment type="domain">
    <text evidence="1">Contains a C-terminal catalytic domain, and an N-terminal region which modulates catalytic activity.</text>
</comment>
<comment type="PTM">
    <text evidence="1">Phosphorylated by CheA. Phosphorylation of the N-terminal regulatory domain activates the methylesterase activity.</text>
</comment>
<comment type="similarity">
    <text evidence="1">Belongs to the CheB family.</text>
</comment>
<proteinExistence type="inferred from homology"/>
<organism>
    <name type="scientific">Geobacter metallireducens (strain ATCC 53774 / DSM 7210 / GS-15)</name>
    <dbReference type="NCBI Taxonomy" id="269799"/>
    <lineage>
        <taxon>Bacteria</taxon>
        <taxon>Pseudomonadati</taxon>
        <taxon>Thermodesulfobacteriota</taxon>
        <taxon>Desulfuromonadia</taxon>
        <taxon>Geobacterales</taxon>
        <taxon>Geobacteraceae</taxon>
        <taxon>Geobacter</taxon>
    </lineage>
</organism>
<gene>
    <name evidence="1" type="primary">cheB5</name>
    <name type="ordered locus">Gmet_3269</name>
</gene>
<keyword id="KW-0145">Chemotaxis</keyword>
<keyword id="KW-0963">Cytoplasm</keyword>
<keyword id="KW-0378">Hydrolase</keyword>
<keyword id="KW-0597">Phosphoprotein</keyword>
<keyword id="KW-1185">Reference proteome</keyword>
<protein>
    <recommendedName>
        <fullName evidence="1">Protein-glutamate methylesterase/protein-glutamine glutaminase 5</fullName>
        <ecNumber evidence="1">3.1.1.61</ecNumber>
        <ecNumber evidence="1">3.5.1.44</ecNumber>
    </recommendedName>
</protein>
<reference key="1">
    <citation type="journal article" date="2009" name="BMC Microbiol.">
        <title>The genome sequence of Geobacter metallireducens: features of metabolism, physiology and regulation common and dissimilar to Geobacter sulfurreducens.</title>
        <authorList>
            <person name="Aklujkar M."/>
            <person name="Krushkal J."/>
            <person name="DiBartolo G."/>
            <person name="Lapidus A."/>
            <person name="Land M.L."/>
            <person name="Lovley D.R."/>
        </authorList>
    </citation>
    <scope>NUCLEOTIDE SEQUENCE [LARGE SCALE GENOMIC DNA]</scope>
    <source>
        <strain>ATCC 53774 / DSM 7210 / GS-15</strain>
    </source>
</reference>